<organism>
    <name type="scientific">Mus musculus</name>
    <name type="common">Mouse</name>
    <dbReference type="NCBI Taxonomy" id="10090"/>
    <lineage>
        <taxon>Eukaryota</taxon>
        <taxon>Metazoa</taxon>
        <taxon>Chordata</taxon>
        <taxon>Craniata</taxon>
        <taxon>Vertebrata</taxon>
        <taxon>Euteleostomi</taxon>
        <taxon>Mammalia</taxon>
        <taxon>Eutheria</taxon>
        <taxon>Euarchontoglires</taxon>
        <taxon>Glires</taxon>
        <taxon>Rodentia</taxon>
        <taxon>Myomorpha</taxon>
        <taxon>Muroidea</taxon>
        <taxon>Muridae</taxon>
        <taxon>Murinae</taxon>
        <taxon>Mus</taxon>
        <taxon>Mus</taxon>
    </lineage>
</organism>
<reference key="1">
    <citation type="journal article" date="2005" name="Science">
        <title>The transcriptional landscape of the mammalian genome.</title>
        <authorList>
            <person name="Carninci P."/>
            <person name="Kasukawa T."/>
            <person name="Katayama S."/>
            <person name="Gough J."/>
            <person name="Frith M.C."/>
            <person name="Maeda N."/>
            <person name="Oyama R."/>
            <person name="Ravasi T."/>
            <person name="Lenhard B."/>
            <person name="Wells C."/>
            <person name="Kodzius R."/>
            <person name="Shimokawa K."/>
            <person name="Bajic V.B."/>
            <person name="Brenner S.E."/>
            <person name="Batalov S."/>
            <person name="Forrest A.R."/>
            <person name="Zavolan M."/>
            <person name="Davis M.J."/>
            <person name="Wilming L.G."/>
            <person name="Aidinis V."/>
            <person name="Allen J.E."/>
            <person name="Ambesi-Impiombato A."/>
            <person name="Apweiler R."/>
            <person name="Aturaliya R.N."/>
            <person name="Bailey T.L."/>
            <person name="Bansal M."/>
            <person name="Baxter L."/>
            <person name="Beisel K.W."/>
            <person name="Bersano T."/>
            <person name="Bono H."/>
            <person name="Chalk A.M."/>
            <person name="Chiu K.P."/>
            <person name="Choudhary V."/>
            <person name="Christoffels A."/>
            <person name="Clutterbuck D.R."/>
            <person name="Crowe M.L."/>
            <person name="Dalla E."/>
            <person name="Dalrymple B.P."/>
            <person name="de Bono B."/>
            <person name="Della Gatta G."/>
            <person name="di Bernardo D."/>
            <person name="Down T."/>
            <person name="Engstrom P."/>
            <person name="Fagiolini M."/>
            <person name="Faulkner G."/>
            <person name="Fletcher C.F."/>
            <person name="Fukushima T."/>
            <person name="Furuno M."/>
            <person name="Futaki S."/>
            <person name="Gariboldi M."/>
            <person name="Georgii-Hemming P."/>
            <person name="Gingeras T.R."/>
            <person name="Gojobori T."/>
            <person name="Green R.E."/>
            <person name="Gustincich S."/>
            <person name="Harbers M."/>
            <person name="Hayashi Y."/>
            <person name="Hensch T.K."/>
            <person name="Hirokawa N."/>
            <person name="Hill D."/>
            <person name="Huminiecki L."/>
            <person name="Iacono M."/>
            <person name="Ikeo K."/>
            <person name="Iwama A."/>
            <person name="Ishikawa T."/>
            <person name="Jakt M."/>
            <person name="Kanapin A."/>
            <person name="Katoh M."/>
            <person name="Kawasawa Y."/>
            <person name="Kelso J."/>
            <person name="Kitamura H."/>
            <person name="Kitano H."/>
            <person name="Kollias G."/>
            <person name="Krishnan S.P."/>
            <person name="Kruger A."/>
            <person name="Kummerfeld S.K."/>
            <person name="Kurochkin I.V."/>
            <person name="Lareau L.F."/>
            <person name="Lazarevic D."/>
            <person name="Lipovich L."/>
            <person name="Liu J."/>
            <person name="Liuni S."/>
            <person name="McWilliam S."/>
            <person name="Madan Babu M."/>
            <person name="Madera M."/>
            <person name="Marchionni L."/>
            <person name="Matsuda H."/>
            <person name="Matsuzawa S."/>
            <person name="Miki H."/>
            <person name="Mignone F."/>
            <person name="Miyake S."/>
            <person name="Morris K."/>
            <person name="Mottagui-Tabar S."/>
            <person name="Mulder N."/>
            <person name="Nakano N."/>
            <person name="Nakauchi H."/>
            <person name="Ng P."/>
            <person name="Nilsson R."/>
            <person name="Nishiguchi S."/>
            <person name="Nishikawa S."/>
            <person name="Nori F."/>
            <person name="Ohara O."/>
            <person name="Okazaki Y."/>
            <person name="Orlando V."/>
            <person name="Pang K.C."/>
            <person name="Pavan W.J."/>
            <person name="Pavesi G."/>
            <person name="Pesole G."/>
            <person name="Petrovsky N."/>
            <person name="Piazza S."/>
            <person name="Reed J."/>
            <person name="Reid J.F."/>
            <person name="Ring B.Z."/>
            <person name="Ringwald M."/>
            <person name="Rost B."/>
            <person name="Ruan Y."/>
            <person name="Salzberg S.L."/>
            <person name="Sandelin A."/>
            <person name="Schneider C."/>
            <person name="Schoenbach C."/>
            <person name="Sekiguchi K."/>
            <person name="Semple C.A."/>
            <person name="Seno S."/>
            <person name="Sessa L."/>
            <person name="Sheng Y."/>
            <person name="Shibata Y."/>
            <person name="Shimada H."/>
            <person name="Shimada K."/>
            <person name="Silva D."/>
            <person name="Sinclair B."/>
            <person name="Sperling S."/>
            <person name="Stupka E."/>
            <person name="Sugiura K."/>
            <person name="Sultana R."/>
            <person name="Takenaka Y."/>
            <person name="Taki K."/>
            <person name="Tammoja K."/>
            <person name="Tan S.L."/>
            <person name="Tang S."/>
            <person name="Taylor M.S."/>
            <person name="Tegner J."/>
            <person name="Teichmann S.A."/>
            <person name="Ueda H.R."/>
            <person name="van Nimwegen E."/>
            <person name="Verardo R."/>
            <person name="Wei C.L."/>
            <person name="Yagi K."/>
            <person name="Yamanishi H."/>
            <person name="Zabarovsky E."/>
            <person name="Zhu S."/>
            <person name="Zimmer A."/>
            <person name="Hide W."/>
            <person name="Bult C."/>
            <person name="Grimmond S.M."/>
            <person name="Teasdale R.D."/>
            <person name="Liu E.T."/>
            <person name="Brusic V."/>
            <person name="Quackenbush J."/>
            <person name="Wahlestedt C."/>
            <person name="Mattick J.S."/>
            <person name="Hume D.A."/>
            <person name="Kai C."/>
            <person name="Sasaki D."/>
            <person name="Tomaru Y."/>
            <person name="Fukuda S."/>
            <person name="Kanamori-Katayama M."/>
            <person name="Suzuki M."/>
            <person name="Aoki J."/>
            <person name="Arakawa T."/>
            <person name="Iida J."/>
            <person name="Imamura K."/>
            <person name="Itoh M."/>
            <person name="Kato T."/>
            <person name="Kawaji H."/>
            <person name="Kawagashira N."/>
            <person name="Kawashima T."/>
            <person name="Kojima M."/>
            <person name="Kondo S."/>
            <person name="Konno H."/>
            <person name="Nakano K."/>
            <person name="Ninomiya N."/>
            <person name="Nishio T."/>
            <person name="Okada M."/>
            <person name="Plessy C."/>
            <person name="Shibata K."/>
            <person name="Shiraki T."/>
            <person name="Suzuki S."/>
            <person name="Tagami M."/>
            <person name="Waki K."/>
            <person name="Watahiki A."/>
            <person name="Okamura-Oho Y."/>
            <person name="Suzuki H."/>
            <person name="Kawai J."/>
            <person name="Hayashizaki Y."/>
        </authorList>
    </citation>
    <scope>NUCLEOTIDE SEQUENCE [LARGE SCALE MRNA]</scope>
    <source>
        <strain>C57BL/6J</strain>
        <tissue>Bone marrow</tissue>
        <tissue>Heart</tissue>
    </source>
</reference>
<reference key="2">
    <citation type="submission" date="2005-07" db="EMBL/GenBank/DDBJ databases">
        <authorList>
            <person name="Mural R.J."/>
            <person name="Adams M.D."/>
            <person name="Myers E.W."/>
            <person name="Smith H.O."/>
            <person name="Venter J.C."/>
        </authorList>
    </citation>
    <scope>NUCLEOTIDE SEQUENCE [LARGE SCALE GENOMIC DNA]</scope>
</reference>
<reference key="3">
    <citation type="journal article" date="2004" name="Genome Res.">
        <title>The status, quality, and expansion of the NIH full-length cDNA project: the Mammalian Gene Collection (MGC).</title>
        <authorList>
            <consortium name="The MGC Project Team"/>
        </authorList>
    </citation>
    <scope>NUCLEOTIDE SEQUENCE [LARGE SCALE MRNA]</scope>
    <source>
        <strain>NMRI</strain>
        <tissue>Mammary tumor</tissue>
    </source>
</reference>
<reference key="4">
    <citation type="journal article" date="2010" name="Cell">
        <title>A tissue-specific atlas of mouse protein phosphorylation and expression.</title>
        <authorList>
            <person name="Huttlin E.L."/>
            <person name="Jedrychowski M.P."/>
            <person name="Elias J.E."/>
            <person name="Goswami T."/>
            <person name="Rad R."/>
            <person name="Beausoleil S.A."/>
            <person name="Villen J."/>
            <person name="Haas W."/>
            <person name="Sowa M.E."/>
            <person name="Gygi S.P."/>
        </authorList>
    </citation>
    <scope>IDENTIFICATION BY MASS SPECTROMETRY [LARGE SCALE ANALYSIS]</scope>
    <source>
        <tissue>Kidney</tissue>
        <tissue>Liver</tissue>
        <tissue>Spleen</tissue>
        <tissue>Testis</tissue>
    </source>
</reference>
<sequence length="173" mass="18977">MAASGELVPCSVYFCGSIRGGREDQALYSRIVSRLRRYGKVLTEHVADAELEPRGEEAAGGDQFIHERDLAWLRQADVVVAEVTQPSLGVGYELGRAVALGKPILCLFRPQSGRVLSAMIRGAADGSRFQVWDYAEEEVETMLHRYFEAYLPQGTASSSNPSACLNPTVLEKI</sequence>
<comment type="function">
    <text evidence="2">Part of a nucleotide salvage pathway that eliminates epigenetically modified 5-hydroxymethyl-dCMP (hmdCMP) in a two-step process entailing deamination to cytotoxic 5-hydroxymethyl-dUMP (hmdUMP), followed by its hydrolysis into 5-hydroxymethyluracil (hmU) and 2-deoxy-D-ribose 5-phosphate (deoxyribosephosphate). Catalyzes the second step in that pathway, the hydrolysis of the N-glycosidic bond in hmdUMP, degrading this cytotoxic nucleotide to avoid its genomic integration.</text>
</comment>
<comment type="catalytic activity">
    <reaction evidence="2">
        <text>5-hydroxymethyl-dUMP + H2O = 5-hydroxymethyluracil + 2-deoxy-D-ribose 5-phosphate</text>
        <dbReference type="Rhea" id="RHEA:77099"/>
        <dbReference type="ChEBI" id="CHEBI:15377"/>
        <dbReference type="ChEBI" id="CHEBI:16964"/>
        <dbReference type="ChEBI" id="CHEBI:62877"/>
        <dbReference type="ChEBI" id="CHEBI:90409"/>
    </reaction>
    <physiologicalReaction direction="left-to-right" evidence="2">
        <dbReference type="Rhea" id="RHEA:77100"/>
    </physiologicalReaction>
</comment>
<comment type="subunit">
    <text evidence="2">Monomer and homodimer.</text>
</comment>
<comment type="subcellular location">
    <subcellularLocation>
        <location evidence="2">Cytoplasm</location>
    </subcellularLocation>
    <subcellularLocation>
        <location evidence="2">Nucleus</location>
    </subcellularLocation>
</comment>
<comment type="similarity">
    <text evidence="3">Belongs to the 2'-deoxynucleoside 5'-phosphate N-hydrolase 1 family.</text>
</comment>
<name>DNPH1_MOUSE</name>
<gene>
    <name evidence="5" type="primary">Dnph1</name>
</gene>
<proteinExistence type="evidence at protein level"/>
<feature type="initiator methionine" description="Removed" evidence="2">
    <location>
        <position position="1"/>
    </location>
</feature>
<feature type="chain" id="PRO_0000097201" description="5-hydroxymethyl-dUMP N-hydrolase">
    <location>
        <begin position="2"/>
        <end position="173"/>
    </location>
</feature>
<feature type="binding site" evidence="1">
    <location>
        <position position="16"/>
    </location>
    <ligand>
        <name>5-hydroxymethyl-dUMP</name>
        <dbReference type="ChEBI" id="CHEBI:90409"/>
        <note>ligand shared between homodimeric partners</note>
    </ligand>
</feature>
<feature type="binding site" evidence="1">
    <location>
        <position position="18"/>
    </location>
    <ligand>
        <name>5-hydroxymethyl-dUMP</name>
        <dbReference type="ChEBI" id="CHEBI:90409"/>
        <note>ligand shared between homodimeric partners</note>
    </ligand>
</feature>
<feature type="binding site" evidence="1">
    <location>
        <position position="19"/>
    </location>
    <ligand>
        <name>5-hydroxymethyl-dUMP</name>
        <dbReference type="ChEBI" id="CHEBI:90409"/>
        <note>ligand shared between homodimeric partners</note>
    </ligand>
</feature>
<feature type="binding site" evidence="1">
    <location>
        <position position="20"/>
    </location>
    <ligand>
        <name>5-hydroxymethyl-dUMP</name>
        <dbReference type="ChEBI" id="CHEBI:90409"/>
        <note>ligand shared between homodimeric partners</note>
    </ligand>
</feature>
<feature type="binding site" evidence="1">
    <location>
        <position position="87"/>
    </location>
    <ligand>
        <name>5-hydroxymethyl-dUMP</name>
        <dbReference type="ChEBI" id="CHEBI:90409"/>
        <note>ligand shared between homodimeric partners</note>
    </ligand>
</feature>
<feature type="binding site" evidence="1">
    <location>
        <position position="89"/>
    </location>
    <ligand>
        <name>5-hydroxymethyl-dUMP</name>
        <dbReference type="ChEBI" id="CHEBI:90409"/>
        <note>ligand shared between homodimeric partners</note>
    </ligand>
</feature>
<feature type="binding site" evidence="1">
    <location>
        <position position="93"/>
    </location>
    <ligand>
        <name>5-hydroxymethyl-dUMP</name>
        <dbReference type="ChEBI" id="CHEBI:90409"/>
        <note>ligand shared between homodimeric partners</note>
    </ligand>
</feature>
<feature type="binding site" description="in other chain" evidence="1">
    <location>
        <position position="117"/>
    </location>
    <ligand>
        <name>5-hydroxymethyl-dUMP</name>
        <dbReference type="ChEBI" id="CHEBI:90409"/>
        <note>ligand shared between homodimeric partners</note>
    </ligand>
</feature>
<feature type="modified residue" description="N-acetylalanine" evidence="2">
    <location>
        <position position="2"/>
    </location>
</feature>
<feature type="modified residue" description="Phosphoserine" evidence="2">
    <location>
        <position position="17"/>
    </location>
</feature>
<feature type="modified residue" description="Phosphoserine" evidence="2">
    <location>
        <position position="87"/>
    </location>
</feature>
<feature type="modified residue" description="Phosphoserine" evidence="2">
    <location>
        <position position="112"/>
    </location>
</feature>
<feature type="modified residue" description="Phosphoserine" evidence="2">
    <location>
        <position position="117"/>
    </location>
</feature>
<feature type="modified residue" description="Phosphoserine" evidence="2">
    <location>
        <position position="127"/>
    </location>
</feature>
<feature type="modified residue" description="Phosphoserine" evidence="2">
    <location>
        <position position="158"/>
    </location>
</feature>
<feature type="sequence conflict" description="In Ref. 3; AAH48355." evidence="4" ref="3">
    <original>R</original>
    <variation>Q</variation>
    <location>
        <position position="145"/>
    </location>
</feature>
<feature type="sequence conflict" description="In Ref. 3; AAH48355." evidence="4" ref="3">
    <original>K</original>
    <variation>N</variation>
    <location>
        <position position="172"/>
    </location>
</feature>
<protein>
    <recommendedName>
        <fullName evidence="2">5-hydroxymethyl-dUMP N-hydrolase</fullName>
        <ecNumber evidence="2">3.2.2.-</ecNumber>
    </recommendedName>
    <alternativeName>
        <fullName evidence="5">2'-deoxynucleoside 5'-phosphate N-hydrolase 1</fullName>
    </alternativeName>
</protein>
<keyword id="KW-0007">Acetylation</keyword>
<keyword id="KW-0963">Cytoplasm</keyword>
<keyword id="KW-0326">Glycosidase</keyword>
<keyword id="KW-0378">Hydrolase</keyword>
<keyword id="KW-0546">Nucleotide metabolism</keyword>
<keyword id="KW-0539">Nucleus</keyword>
<keyword id="KW-0597">Phosphoprotein</keyword>
<keyword id="KW-1185">Reference proteome</keyword>
<evidence type="ECO:0000250" key="1">
    <source>
        <dbReference type="UniProtKB" id="O35820"/>
    </source>
</evidence>
<evidence type="ECO:0000250" key="2">
    <source>
        <dbReference type="UniProtKB" id="O43598"/>
    </source>
</evidence>
<evidence type="ECO:0000255" key="3">
    <source>
        <dbReference type="HAMAP-Rule" id="MF_03036"/>
    </source>
</evidence>
<evidence type="ECO:0000305" key="4"/>
<evidence type="ECO:0000312" key="5">
    <source>
        <dbReference type="MGI" id="MGI:3039376"/>
    </source>
</evidence>
<dbReference type="EC" id="3.2.2.-" evidence="2"/>
<dbReference type="EMBL" id="AK146723">
    <property type="protein sequence ID" value="BAE27386.1"/>
    <property type="molecule type" value="mRNA"/>
</dbReference>
<dbReference type="EMBL" id="AK151589">
    <property type="protein sequence ID" value="BAE30529.1"/>
    <property type="molecule type" value="mRNA"/>
</dbReference>
<dbReference type="EMBL" id="CH466559">
    <property type="protein sequence ID" value="EDL23508.1"/>
    <property type="molecule type" value="Genomic_DNA"/>
</dbReference>
<dbReference type="EMBL" id="BC048355">
    <property type="protein sequence ID" value="AAH48355.1"/>
    <property type="molecule type" value="mRNA"/>
</dbReference>
<dbReference type="CCDS" id="CCDS28830.1"/>
<dbReference type="RefSeq" id="NP_997044.2">
    <property type="nucleotide sequence ID" value="NM_207161.3"/>
</dbReference>
<dbReference type="SMR" id="Q80VJ3"/>
<dbReference type="FunCoup" id="Q80VJ3">
    <property type="interactions" value="1278"/>
</dbReference>
<dbReference type="STRING" id="10090.ENSMUSP00000045283"/>
<dbReference type="iPTMnet" id="Q80VJ3"/>
<dbReference type="PhosphoSitePlus" id="Q80VJ3"/>
<dbReference type="SwissPalm" id="Q80VJ3"/>
<dbReference type="jPOST" id="Q80VJ3"/>
<dbReference type="PaxDb" id="10090-ENSMUSP00000045283"/>
<dbReference type="PeptideAtlas" id="Q80VJ3"/>
<dbReference type="ProteomicsDB" id="277484"/>
<dbReference type="Pumba" id="Q80VJ3"/>
<dbReference type="Antibodypedia" id="30354">
    <property type="antibodies" value="199 antibodies from 32 providers"/>
</dbReference>
<dbReference type="DNASU" id="381101"/>
<dbReference type="Ensembl" id="ENSMUST00000046497.8">
    <property type="protein sequence ID" value="ENSMUSP00000045283.7"/>
    <property type="gene ID" value="ENSMUSG00000040658.8"/>
</dbReference>
<dbReference type="GeneID" id="381101"/>
<dbReference type="KEGG" id="mmu:381101"/>
<dbReference type="UCSC" id="uc008csz.1">
    <property type="organism name" value="mouse"/>
</dbReference>
<dbReference type="AGR" id="MGI:3039376"/>
<dbReference type="CTD" id="10591"/>
<dbReference type="MGI" id="MGI:3039376">
    <property type="gene designation" value="Dnph1"/>
</dbReference>
<dbReference type="VEuPathDB" id="HostDB:ENSMUSG00000040658"/>
<dbReference type="eggNOG" id="ENOG502S2J2">
    <property type="taxonomic scope" value="Eukaryota"/>
</dbReference>
<dbReference type="GeneTree" id="ENSGT00390000001216"/>
<dbReference type="HOGENOM" id="CLU_100069_0_0_1"/>
<dbReference type="InParanoid" id="Q80VJ3"/>
<dbReference type="OMA" id="EVLSWHV"/>
<dbReference type="OrthoDB" id="18087at2759"/>
<dbReference type="PhylomeDB" id="Q80VJ3"/>
<dbReference type="TreeFam" id="TF329719"/>
<dbReference type="Reactome" id="R-MMU-74259">
    <property type="pathway name" value="Purine catabolism"/>
</dbReference>
<dbReference type="BioGRID-ORCS" id="381101">
    <property type="hits" value="3 hits in 77 CRISPR screens"/>
</dbReference>
<dbReference type="PRO" id="PR:Q80VJ3"/>
<dbReference type="Proteomes" id="UP000000589">
    <property type="component" value="Chromosome 17"/>
</dbReference>
<dbReference type="RNAct" id="Q80VJ3">
    <property type="molecule type" value="protein"/>
</dbReference>
<dbReference type="Bgee" id="ENSMUSG00000040658">
    <property type="expression patterns" value="Expressed in otic placode and 235 other cell types or tissues"/>
</dbReference>
<dbReference type="GO" id="GO:0005737">
    <property type="term" value="C:cytoplasm"/>
    <property type="evidence" value="ECO:0000250"/>
    <property type="project" value="UniProtKB"/>
</dbReference>
<dbReference type="GO" id="GO:0005634">
    <property type="term" value="C:nucleus"/>
    <property type="evidence" value="ECO:0000250"/>
    <property type="project" value="UniProtKB"/>
</dbReference>
<dbReference type="GO" id="GO:0070694">
    <property type="term" value="F:5-hydroxymethyl-dUMP N-hydrolase activity"/>
    <property type="evidence" value="ECO:0000250"/>
    <property type="project" value="UniProtKB"/>
</dbReference>
<dbReference type="GO" id="GO:0042803">
    <property type="term" value="F:protein homodimerization activity"/>
    <property type="evidence" value="ECO:0007669"/>
    <property type="project" value="UniProtKB-UniRule"/>
</dbReference>
<dbReference type="GO" id="GO:0000255">
    <property type="term" value="P:allantoin metabolic process"/>
    <property type="evidence" value="ECO:0000266"/>
    <property type="project" value="MGI"/>
</dbReference>
<dbReference type="GO" id="GO:0043605">
    <property type="term" value="P:amide catabolic process"/>
    <property type="evidence" value="ECO:0000266"/>
    <property type="project" value="MGI"/>
</dbReference>
<dbReference type="GO" id="GO:0009159">
    <property type="term" value="P:deoxyribonucleoside monophosphate catabolic process"/>
    <property type="evidence" value="ECO:0000250"/>
    <property type="project" value="UniProtKB"/>
</dbReference>
<dbReference type="GO" id="GO:0046055">
    <property type="term" value="P:dGMP catabolic process"/>
    <property type="evidence" value="ECO:0000266"/>
    <property type="project" value="MGI"/>
</dbReference>
<dbReference type="GO" id="GO:0030855">
    <property type="term" value="P:epithelial cell differentiation"/>
    <property type="evidence" value="ECO:0007669"/>
    <property type="project" value="Ensembl"/>
</dbReference>
<dbReference type="GO" id="GO:0043174">
    <property type="term" value="P:nucleoside salvage"/>
    <property type="evidence" value="ECO:0000250"/>
    <property type="project" value="UniProtKB"/>
</dbReference>
<dbReference type="GO" id="GO:0030307">
    <property type="term" value="P:positive regulation of cell growth"/>
    <property type="evidence" value="ECO:0000250"/>
    <property type="project" value="UniProtKB"/>
</dbReference>
<dbReference type="FunFam" id="3.40.50.450:FF:000019">
    <property type="entry name" value="2'-deoxynucleoside 5'-phosphate N-hydrolase 1"/>
    <property type="match status" value="1"/>
</dbReference>
<dbReference type="Gene3D" id="3.40.50.450">
    <property type="match status" value="1"/>
</dbReference>
<dbReference type="HAMAP" id="MF_03036">
    <property type="entry name" value="Nuc_phosphate_hydrolase"/>
    <property type="match status" value="1"/>
</dbReference>
<dbReference type="InterPro" id="IPR051239">
    <property type="entry name" value="2'-dNMP_N-hydrolase"/>
</dbReference>
<dbReference type="InterPro" id="IPR028607">
    <property type="entry name" value="DNPH1"/>
</dbReference>
<dbReference type="InterPro" id="IPR007710">
    <property type="entry name" value="Nucleoside_deoxyribTrfase"/>
</dbReference>
<dbReference type="PANTHER" id="PTHR15364">
    <property type="entry name" value="2'-DEOXYNUCLEOSIDE 5'-PHOSPHATE N-HYDROLASE 1"/>
    <property type="match status" value="1"/>
</dbReference>
<dbReference type="PANTHER" id="PTHR15364:SF0">
    <property type="entry name" value="2'-DEOXYNUCLEOSIDE 5'-PHOSPHATE N-HYDROLASE 1"/>
    <property type="match status" value="1"/>
</dbReference>
<dbReference type="Pfam" id="PF05014">
    <property type="entry name" value="Nuc_deoxyrib_tr"/>
    <property type="match status" value="1"/>
</dbReference>
<dbReference type="SUPFAM" id="SSF52309">
    <property type="entry name" value="N-(deoxy)ribosyltransferase-like"/>
    <property type="match status" value="1"/>
</dbReference>
<accession>Q80VJ3</accession>
<accession>Q3U9Y7</accession>